<name>KTHY_BIFLD</name>
<evidence type="ECO:0000255" key="1">
    <source>
        <dbReference type="HAMAP-Rule" id="MF_00165"/>
    </source>
</evidence>
<keyword id="KW-0067">ATP-binding</keyword>
<keyword id="KW-0418">Kinase</keyword>
<keyword id="KW-0545">Nucleotide biosynthesis</keyword>
<keyword id="KW-0547">Nucleotide-binding</keyword>
<keyword id="KW-0808">Transferase</keyword>
<comment type="function">
    <text evidence="1">Phosphorylation of dTMP to form dTDP in both de novo and salvage pathways of dTTP synthesis.</text>
</comment>
<comment type="catalytic activity">
    <reaction evidence="1">
        <text>dTMP + ATP = dTDP + ADP</text>
        <dbReference type="Rhea" id="RHEA:13517"/>
        <dbReference type="ChEBI" id="CHEBI:30616"/>
        <dbReference type="ChEBI" id="CHEBI:58369"/>
        <dbReference type="ChEBI" id="CHEBI:63528"/>
        <dbReference type="ChEBI" id="CHEBI:456216"/>
        <dbReference type="EC" id="2.7.4.9"/>
    </reaction>
</comment>
<comment type="similarity">
    <text evidence="1">Belongs to the thymidylate kinase family.</text>
</comment>
<reference key="1">
    <citation type="journal article" date="2008" name="BMC Genomics">
        <title>Comparative genomic analysis of the gut bacterium Bifidobacterium longum reveals loci susceptible to deletion during pure culture growth.</title>
        <authorList>
            <person name="Lee J.H."/>
            <person name="Karamychev V.N."/>
            <person name="Kozyavkin S.A."/>
            <person name="Mills D."/>
            <person name="Pavlov A.R."/>
            <person name="Pavlova N.V."/>
            <person name="Polouchine N.N."/>
            <person name="Richardson P.M."/>
            <person name="Shakhova V.V."/>
            <person name="Slesarev A.I."/>
            <person name="Weimer B."/>
            <person name="O'Sullivan D.J."/>
        </authorList>
    </citation>
    <scope>NUCLEOTIDE SEQUENCE [LARGE SCALE GENOMIC DNA]</scope>
    <source>
        <strain>DJO10A</strain>
    </source>
</reference>
<sequence>MSGLFVSFEGVDGVGKTTQVERLRAYLEAQGRTVVVTREPGGTALGKAIRQLLLHGVDGGAVDIAPRAEALLFAADRAQHVAETIRPALERGEVVITDRYLDSSLAYQAGGRELTPEEIRSLSMWATNNLLPDRTYLLDMDPALSHNRLEHAEDRMESAGSDFQSRTRQAFLDLAAAEPNRFRVIDASQSIEAVWAAIESDIKELA</sequence>
<accession>B3DUA1</accession>
<protein>
    <recommendedName>
        <fullName evidence="1">Thymidylate kinase</fullName>
        <ecNumber evidence="1">2.7.4.9</ecNumber>
    </recommendedName>
    <alternativeName>
        <fullName evidence="1">dTMP kinase</fullName>
    </alternativeName>
</protein>
<feature type="chain" id="PRO_1000097376" description="Thymidylate kinase">
    <location>
        <begin position="1"/>
        <end position="206"/>
    </location>
</feature>
<feature type="binding site" evidence="1">
    <location>
        <begin position="10"/>
        <end position="17"/>
    </location>
    <ligand>
        <name>ATP</name>
        <dbReference type="ChEBI" id="CHEBI:30616"/>
    </ligand>
</feature>
<proteinExistence type="inferred from homology"/>
<gene>
    <name evidence="1" type="primary">tmk</name>
    <name type="ordered locus">BLD_1275</name>
</gene>
<dbReference type="EC" id="2.7.4.9" evidence="1"/>
<dbReference type="EMBL" id="CP000605">
    <property type="protein sequence ID" value="ACD98720.1"/>
    <property type="molecule type" value="Genomic_DNA"/>
</dbReference>
<dbReference type="RefSeq" id="WP_010081362.1">
    <property type="nucleotide sequence ID" value="NZ_AABM02000012.1"/>
</dbReference>
<dbReference type="SMR" id="B3DUA1"/>
<dbReference type="KEGG" id="blj:BLD_1275"/>
<dbReference type="HOGENOM" id="CLU_049131_0_0_11"/>
<dbReference type="Proteomes" id="UP000002419">
    <property type="component" value="Chromosome"/>
</dbReference>
<dbReference type="GO" id="GO:0005829">
    <property type="term" value="C:cytosol"/>
    <property type="evidence" value="ECO:0007669"/>
    <property type="project" value="TreeGrafter"/>
</dbReference>
<dbReference type="GO" id="GO:0005524">
    <property type="term" value="F:ATP binding"/>
    <property type="evidence" value="ECO:0007669"/>
    <property type="project" value="UniProtKB-UniRule"/>
</dbReference>
<dbReference type="GO" id="GO:0004798">
    <property type="term" value="F:dTMP kinase activity"/>
    <property type="evidence" value="ECO:0007669"/>
    <property type="project" value="UniProtKB-UniRule"/>
</dbReference>
<dbReference type="GO" id="GO:0006233">
    <property type="term" value="P:dTDP biosynthetic process"/>
    <property type="evidence" value="ECO:0007669"/>
    <property type="project" value="InterPro"/>
</dbReference>
<dbReference type="GO" id="GO:0006235">
    <property type="term" value="P:dTTP biosynthetic process"/>
    <property type="evidence" value="ECO:0007669"/>
    <property type="project" value="UniProtKB-UniRule"/>
</dbReference>
<dbReference type="GO" id="GO:0006227">
    <property type="term" value="P:dUDP biosynthetic process"/>
    <property type="evidence" value="ECO:0007669"/>
    <property type="project" value="TreeGrafter"/>
</dbReference>
<dbReference type="CDD" id="cd01672">
    <property type="entry name" value="TMPK"/>
    <property type="match status" value="1"/>
</dbReference>
<dbReference type="FunFam" id="3.40.50.300:FF:000225">
    <property type="entry name" value="Thymidylate kinase"/>
    <property type="match status" value="1"/>
</dbReference>
<dbReference type="Gene3D" id="3.40.50.300">
    <property type="entry name" value="P-loop containing nucleotide triphosphate hydrolases"/>
    <property type="match status" value="1"/>
</dbReference>
<dbReference type="HAMAP" id="MF_00165">
    <property type="entry name" value="Thymidylate_kinase"/>
    <property type="match status" value="1"/>
</dbReference>
<dbReference type="InterPro" id="IPR027417">
    <property type="entry name" value="P-loop_NTPase"/>
</dbReference>
<dbReference type="InterPro" id="IPR039430">
    <property type="entry name" value="Thymidylate_kin-like_dom"/>
</dbReference>
<dbReference type="InterPro" id="IPR018095">
    <property type="entry name" value="Thymidylate_kin_CS"/>
</dbReference>
<dbReference type="InterPro" id="IPR018094">
    <property type="entry name" value="Thymidylate_kinase"/>
</dbReference>
<dbReference type="NCBIfam" id="TIGR00041">
    <property type="entry name" value="DTMP_kinase"/>
    <property type="match status" value="1"/>
</dbReference>
<dbReference type="PANTHER" id="PTHR10344">
    <property type="entry name" value="THYMIDYLATE KINASE"/>
    <property type="match status" value="1"/>
</dbReference>
<dbReference type="PANTHER" id="PTHR10344:SF4">
    <property type="entry name" value="UMP-CMP KINASE 2, MITOCHONDRIAL"/>
    <property type="match status" value="1"/>
</dbReference>
<dbReference type="Pfam" id="PF02223">
    <property type="entry name" value="Thymidylate_kin"/>
    <property type="match status" value="1"/>
</dbReference>
<dbReference type="SUPFAM" id="SSF52540">
    <property type="entry name" value="P-loop containing nucleoside triphosphate hydrolases"/>
    <property type="match status" value="1"/>
</dbReference>
<dbReference type="PROSITE" id="PS01331">
    <property type="entry name" value="THYMIDYLATE_KINASE"/>
    <property type="match status" value="1"/>
</dbReference>
<organism>
    <name type="scientific">Bifidobacterium longum (strain DJO10A)</name>
    <dbReference type="NCBI Taxonomy" id="205913"/>
    <lineage>
        <taxon>Bacteria</taxon>
        <taxon>Bacillati</taxon>
        <taxon>Actinomycetota</taxon>
        <taxon>Actinomycetes</taxon>
        <taxon>Bifidobacteriales</taxon>
        <taxon>Bifidobacteriaceae</taxon>
        <taxon>Bifidobacterium</taxon>
    </lineage>
</organism>